<proteinExistence type="inferred from homology"/>
<reference key="1">
    <citation type="journal article" date="2008" name="J. Bacteriol.">
        <title>The genome sequence of the tomato-pathogenic actinomycete Clavibacter michiganensis subsp. michiganensis NCPPB382 reveals a large island involved in pathogenicity.</title>
        <authorList>
            <person name="Gartemann K.-H."/>
            <person name="Abt B."/>
            <person name="Bekel T."/>
            <person name="Burger A."/>
            <person name="Engemann J."/>
            <person name="Fluegel M."/>
            <person name="Gaigalat L."/>
            <person name="Goesmann A."/>
            <person name="Graefen I."/>
            <person name="Kalinowski J."/>
            <person name="Kaup O."/>
            <person name="Kirchner O."/>
            <person name="Krause L."/>
            <person name="Linke B."/>
            <person name="McHardy A."/>
            <person name="Meyer F."/>
            <person name="Pohle S."/>
            <person name="Rueckert C."/>
            <person name="Schneiker S."/>
            <person name="Zellermann E.-M."/>
            <person name="Puehler A."/>
            <person name="Eichenlaub R."/>
            <person name="Kaiser O."/>
            <person name="Bartels D."/>
        </authorList>
    </citation>
    <scope>NUCLEOTIDE SEQUENCE [LARGE SCALE GENOMIC DNA]</scope>
    <source>
        <strain>NCPPB 382</strain>
    </source>
</reference>
<gene>
    <name evidence="1" type="primary">rpsG</name>
    <name type="ordered locus">CMM_2622</name>
</gene>
<feature type="chain" id="PRO_1000014174" description="Small ribosomal subunit protein uS7">
    <location>
        <begin position="1"/>
        <end position="156"/>
    </location>
</feature>
<keyword id="KW-0687">Ribonucleoprotein</keyword>
<keyword id="KW-0689">Ribosomal protein</keyword>
<keyword id="KW-0694">RNA-binding</keyword>
<keyword id="KW-0699">rRNA-binding</keyword>
<keyword id="KW-0820">tRNA-binding</keyword>
<protein>
    <recommendedName>
        <fullName evidence="1">Small ribosomal subunit protein uS7</fullName>
    </recommendedName>
    <alternativeName>
        <fullName evidence="2">30S ribosomal protein S7</fullName>
    </alternativeName>
</protein>
<dbReference type="EMBL" id="AM711867">
    <property type="protein sequence ID" value="CAN02705.1"/>
    <property type="molecule type" value="Genomic_DNA"/>
</dbReference>
<dbReference type="RefSeq" id="WP_012039311.1">
    <property type="nucleotide sequence ID" value="NC_009480.1"/>
</dbReference>
<dbReference type="SMR" id="A5CUB8"/>
<dbReference type="GeneID" id="92984334"/>
<dbReference type="KEGG" id="cmi:CMM_2622"/>
<dbReference type="eggNOG" id="COG0049">
    <property type="taxonomic scope" value="Bacteria"/>
</dbReference>
<dbReference type="HOGENOM" id="CLU_072226_1_1_11"/>
<dbReference type="OrthoDB" id="9807653at2"/>
<dbReference type="Proteomes" id="UP000001564">
    <property type="component" value="Chromosome"/>
</dbReference>
<dbReference type="GO" id="GO:0015935">
    <property type="term" value="C:small ribosomal subunit"/>
    <property type="evidence" value="ECO:0007669"/>
    <property type="project" value="InterPro"/>
</dbReference>
<dbReference type="GO" id="GO:0019843">
    <property type="term" value="F:rRNA binding"/>
    <property type="evidence" value="ECO:0007669"/>
    <property type="project" value="UniProtKB-UniRule"/>
</dbReference>
<dbReference type="GO" id="GO:0003735">
    <property type="term" value="F:structural constituent of ribosome"/>
    <property type="evidence" value="ECO:0007669"/>
    <property type="project" value="InterPro"/>
</dbReference>
<dbReference type="GO" id="GO:0000049">
    <property type="term" value="F:tRNA binding"/>
    <property type="evidence" value="ECO:0007669"/>
    <property type="project" value="UniProtKB-UniRule"/>
</dbReference>
<dbReference type="GO" id="GO:0006412">
    <property type="term" value="P:translation"/>
    <property type="evidence" value="ECO:0007669"/>
    <property type="project" value="UniProtKB-UniRule"/>
</dbReference>
<dbReference type="CDD" id="cd14869">
    <property type="entry name" value="uS7_Bacteria"/>
    <property type="match status" value="1"/>
</dbReference>
<dbReference type="FunFam" id="1.10.455.10:FF:000001">
    <property type="entry name" value="30S ribosomal protein S7"/>
    <property type="match status" value="1"/>
</dbReference>
<dbReference type="Gene3D" id="1.10.455.10">
    <property type="entry name" value="Ribosomal protein S7 domain"/>
    <property type="match status" value="1"/>
</dbReference>
<dbReference type="HAMAP" id="MF_00480_B">
    <property type="entry name" value="Ribosomal_uS7_B"/>
    <property type="match status" value="1"/>
</dbReference>
<dbReference type="InterPro" id="IPR000235">
    <property type="entry name" value="Ribosomal_uS7"/>
</dbReference>
<dbReference type="InterPro" id="IPR005717">
    <property type="entry name" value="Ribosomal_uS7_bac/org-type"/>
</dbReference>
<dbReference type="InterPro" id="IPR023798">
    <property type="entry name" value="Ribosomal_uS7_dom"/>
</dbReference>
<dbReference type="InterPro" id="IPR036823">
    <property type="entry name" value="Ribosomal_uS7_dom_sf"/>
</dbReference>
<dbReference type="NCBIfam" id="TIGR01029">
    <property type="entry name" value="rpsG_bact"/>
    <property type="match status" value="1"/>
</dbReference>
<dbReference type="PANTHER" id="PTHR11205">
    <property type="entry name" value="RIBOSOMAL PROTEIN S7"/>
    <property type="match status" value="1"/>
</dbReference>
<dbReference type="Pfam" id="PF00177">
    <property type="entry name" value="Ribosomal_S7"/>
    <property type="match status" value="1"/>
</dbReference>
<dbReference type="PIRSF" id="PIRSF002122">
    <property type="entry name" value="RPS7p_RPS7a_RPS5e_RPS7o"/>
    <property type="match status" value="1"/>
</dbReference>
<dbReference type="SUPFAM" id="SSF47973">
    <property type="entry name" value="Ribosomal protein S7"/>
    <property type="match status" value="1"/>
</dbReference>
<evidence type="ECO:0000255" key="1">
    <source>
        <dbReference type="HAMAP-Rule" id="MF_00480"/>
    </source>
</evidence>
<evidence type="ECO:0000305" key="2"/>
<sequence>MPRKGPAPKRPVVADPVYGAPIVSQLVNKILLDGKKGLAEKIVYDALAGVAAKNGQDAVVTLKKALDNVRPALEVRSRRVGGSTYQVPIEVKPHRANTLALRWLTTYAKSRREKTMTERLTNEILDASNGLGAAVKRREDTHKMAESNKAFAHYRW</sequence>
<accession>A5CUB8</accession>
<organism>
    <name type="scientific">Clavibacter michiganensis subsp. michiganensis (strain NCPPB 382)</name>
    <dbReference type="NCBI Taxonomy" id="443906"/>
    <lineage>
        <taxon>Bacteria</taxon>
        <taxon>Bacillati</taxon>
        <taxon>Actinomycetota</taxon>
        <taxon>Actinomycetes</taxon>
        <taxon>Micrococcales</taxon>
        <taxon>Microbacteriaceae</taxon>
        <taxon>Clavibacter</taxon>
    </lineage>
</organism>
<comment type="function">
    <text evidence="1">One of the primary rRNA binding proteins, it binds directly to 16S rRNA where it nucleates assembly of the head domain of the 30S subunit. Is located at the subunit interface close to the decoding center, probably blocks exit of the E-site tRNA.</text>
</comment>
<comment type="subunit">
    <text evidence="1">Part of the 30S ribosomal subunit. Contacts proteins S9 and S11.</text>
</comment>
<comment type="similarity">
    <text evidence="1">Belongs to the universal ribosomal protein uS7 family.</text>
</comment>
<name>RS7_CLAM3</name>